<proteinExistence type="inferred from homology"/>
<accession>Q32AV3</accession>
<reference key="1">
    <citation type="journal article" date="2005" name="Nucleic Acids Res.">
        <title>Genome dynamics and diversity of Shigella species, the etiologic agents of bacillary dysentery.</title>
        <authorList>
            <person name="Yang F."/>
            <person name="Yang J."/>
            <person name="Zhang X."/>
            <person name="Chen L."/>
            <person name="Jiang Y."/>
            <person name="Yan Y."/>
            <person name="Tang X."/>
            <person name="Wang J."/>
            <person name="Xiong Z."/>
            <person name="Dong J."/>
            <person name="Xue Y."/>
            <person name="Zhu Y."/>
            <person name="Xu X."/>
            <person name="Sun L."/>
            <person name="Chen S."/>
            <person name="Nie H."/>
            <person name="Peng J."/>
            <person name="Xu J."/>
            <person name="Wang Y."/>
            <person name="Yuan Z."/>
            <person name="Wen Y."/>
            <person name="Yao Z."/>
            <person name="Shen Y."/>
            <person name="Qiang B."/>
            <person name="Hou Y."/>
            <person name="Yu J."/>
            <person name="Jin Q."/>
        </authorList>
    </citation>
    <scope>NUCLEOTIDE SEQUENCE [LARGE SCALE GENOMIC DNA]</scope>
    <source>
        <strain>Sd197</strain>
    </source>
</reference>
<organism>
    <name type="scientific">Shigella dysenteriae serotype 1 (strain Sd197)</name>
    <dbReference type="NCBI Taxonomy" id="300267"/>
    <lineage>
        <taxon>Bacteria</taxon>
        <taxon>Pseudomonadati</taxon>
        <taxon>Pseudomonadota</taxon>
        <taxon>Gammaproteobacteria</taxon>
        <taxon>Enterobacterales</taxon>
        <taxon>Enterobacteriaceae</taxon>
        <taxon>Shigella</taxon>
    </lineage>
</organism>
<gene>
    <name evidence="1" type="primary">glgB</name>
    <name type="ordered locus">SDY_3578</name>
</gene>
<name>GLGB_SHIDS</name>
<keyword id="KW-0119">Carbohydrate metabolism</keyword>
<keyword id="KW-0320">Glycogen biosynthesis</keyword>
<keyword id="KW-0321">Glycogen metabolism</keyword>
<keyword id="KW-0328">Glycosyltransferase</keyword>
<keyword id="KW-1185">Reference proteome</keyword>
<keyword id="KW-0808">Transferase</keyword>
<dbReference type="EC" id="2.4.1.18" evidence="1"/>
<dbReference type="EMBL" id="CP000034">
    <property type="protein sequence ID" value="ABB63552.1"/>
    <property type="molecule type" value="Genomic_DNA"/>
</dbReference>
<dbReference type="RefSeq" id="WP_001283710.1">
    <property type="nucleotide sequence ID" value="NC_007606.1"/>
</dbReference>
<dbReference type="RefSeq" id="YP_405043.1">
    <property type="nucleotide sequence ID" value="NC_007606.1"/>
</dbReference>
<dbReference type="SMR" id="Q32AV3"/>
<dbReference type="STRING" id="300267.SDY_3578"/>
<dbReference type="CAZy" id="CBM48">
    <property type="family name" value="Carbohydrate-Binding Module Family 48"/>
</dbReference>
<dbReference type="CAZy" id="GH13">
    <property type="family name" value="Glycoside Hydrolase Family 13"/>
</dbReference>
<dbReference type="EnsemblBacteria" id="ABB63552">
    <property type="protein sequence ID" value="ABB63552"/>
    <property type="gene ID" value="SDY_3578"/>
</dbReference>
<dbReference type="KEGG" id="sdy:SDY_3578"/>
<dbReference type="PATRIC" id="fig|300267.13.peg.4249"/>
<dbReference type="HOGENOM" id="CLU_004245_3_2_6"/>
<dbReference type="UniPathway" id="UPA00164"/>
<dbReference type="Proteomes" id="UP000002716">
    <property type="component" value="Chromosome"/>
</dbReference>
<dbReference type="GO" id="GO:0005829">
    <property type="term" value="C:cytosol"/>
    <property type="evidence" value="ECO:0007669"/>
    <property type="project" value="TreeGrafter"/>
</dbReference>
<dbReference type="GO" id="GO:0003844">
    <property type="term" value="F:1,4-alpha-glucan branching enzyme activity"/>
    <property type="evidence" value="ECO:0007669"/>
    <property type="project" value="UniProtKB-UniRule"/>
</dbReference>
<dbReference type="GO" id="GO:0043169">
    <property type="term" value="F:cation binding"/>
    <property type="evidence" value="ECO:0007669"/>
    <property type="project" value="InterPro"/>
</dbReference>
<dbReference type="GO" id="GO:0004553">
    <property type="term" value="F:hydrolase activity, hydrolyzing O-glycosyl compounds"/>
    <property type="evidence" value="ECO:0007669"/>
    <property type="project" value="InterPro"/>
</dbReference>
<dbReference type="GO" id="GO:0005978">
    <property type="term" value="P:glycogen biosynthetic process"/>
    <property type="evidence" value="ECO:0007669"/>
    <property type="project" value="UniProtKB-UniRule"/>
</dbReference>
<dbReference type="CDD" id="cd11322">
    <property type="entry name" value="AmyAc_Glg_BE"/>
    <property type="match status" value="1"/>
</dbReference>
<dbReference type="CDD" id="cd02855">
    <property type="entry name" value="E_set_GBE_prok_N"/>
    <property type="match status" value="1"/>
</dbReference>
<dbReference type="FunFam" id="2.60.40.10:FF:000169">
    <property type="entry name" value="1,4-alpha-glucan branching enzyme GlgB"/>
    <property type="match status" value="1"/>
</dbReference>
<dbReference type="FunFam" id="2.60.40.10:FF:000331">
    <property type="entry name" value="1,4-alpha-glucan branching enzyme GlgB"/>
    <property type="match status" value="1"/>
</dbReference>
<dbReference type="FunFam" id="2.60.40.1180:FF:000002">
    <property type="entry name" value="1,4-alpha-glucan branching enzyme GlgB"/>
    <property type="match status" value="1"/>
</dbReference>
<dbReference type="FunFam" id="3.20.20.80:FF:000003">
    <property type="entry name" value="1,4-alpha-glucan branching enzyme GlgB"/>
    <property type="match status" value="1"/>
</dbReference>
<dbReference type="Gene3D" id="3.20.20.80">
    <property type="entry name" value="Glycosidases"/>
    <property type="match status" value="1"/>
</dbReference>
<dbReference type="Gene3D" id="2.60.40.1180">
    <property type="entry name" value="Golgi alpha-mannosidase II"/>
    <property type="match status" value="1"/>
</dbReference>
<dbReference type="Gene3D" id="2.60.40.10">
    <property type="entry name" value="Immunoglobulins"/>
    <property type="match status" value="2"/>
</dbReference>
<dbReference type="HAMAP" id="MF_00685">
    <property type="entry name" value="GlgB"/>
    <property type="match status" value="1"/>
</dbReference>
<dbReference type="InterPro" id="IPR006048">
    <property type="entry name" value="A-amylase/branching_C"/>
</dbReference>
<dbReference type="InterPro" id="IPR037439">
    <property type="entry name" value="Branching_enzy"/>
</dbReference>
<dbReference type="InterPro" id="IPR006407">
    <property type="entry name" value="GlgB"/>
</dbReference>
<dbReference type="InterPro" id="IPR054169">
    <property type="entry name" value="GlgB_N"/>
</dbReference>
<dbReference type="InterPro" id="IPR044143">
    <property type="entry name" value="GlgB_N_E_set_prok"/>
</dbReference>
<dbReference type="InterPro" id="IPR006047">
    <property type="entry name" value="Glyco_hydro_13_cat_dom"/>
</dbReference>
<dbReference type="InterPro" id="IPR004193">
    <property type="entry name" value="Glyco_hydro_13_N"/>
</dbReference>
<dbReference type="InterPro" id="IPR013780">
    <property type="entry name" value="Glyco_hydro_b"/>
</dbReference>
<dbReference type="InterPro" id="IPR017853">
    <property type="entry name" value="Glycoside_hydrolase_SF"/>
</dbReference>
<dbReference type="InterPro" id="IPR013783">
    <property type="entry name" value="Ig-like_fold"/>
</dbReference>
<dbReference type="InterPro" id="IPR014756">
    <property type="entry name" value="Ig_E-set"/>
</dbReference>
<dbReference type="NCBIfam" id="TIGR01515">
    <property type="entry name" value="branching_enzym"/>
    <property type="match status" value="1"/>
</dbReference>
<dbReference type="NCBIfam" id="NF003811">
    <property type="entry name" value="PRK05402.1"/>
    <property type="match status" value="1"/>
</dbReference>
<dbReference type="NCBIfam" id="NF008967">
    <property type="entry name" value="PRK12313.1"/>
    <property type="match status" value="1"/>
</dbReference>
<dbReference type="PANTHER" id="PTHR43651">
    <property type="entry name" value="1,4-ALPHA-GLUCAN-BRANCHING ENZYME"/>
    <property type="match status" value="1"/>
</dbReference>
<dbReference type="PANTHER" id="PTHR43651:SF3">
    <property type="entry name" value="1,4-ALPHA-GLUCAN-BRANCHING ENZYME"/>
    <property type="match status" value="1"/>
</dbReference>
<dbReference type="Pfam" id="PF00128">
    <property type="entry name" value="Alpha-amylase"/>
    <property type="match status" value="1"/>
</dbReference>
<dbReference type="Pfam" id="PF02806">
    <property type="entry name" value="Alpha-amylase_C"/>
    <property type="match status" value="1"/>
</dbReference>
<dbReference type="Pfam" id="PF02922">
    <property type="entry name" value="CBM_48"/>
    <property type="match status" value="1"/>
</dbReference>
<dbReference type="Pfam" id="PF22019">
    <property type="entry name" value="GlgB_N"/>
    <property type="match status" value="1"/>
</dbReference>
<dbReference type="PIRSF" id="PIRSF000463">
    <property type="entry name" value="GlgB"/>
    <property type="match status" value="1"/>
</dbReference>
<dbReference type="SMART" id="SM00642">
    <property type="entry name" value="Aamy"/>
    <property type="match status" value="1"/>
</dbReference>
<dbReference type="SUPFAM" id="SSF51445">
    <property type="entry name" value="(Trans)glycosidases"/>
    <property type="match status" value="1"/>
</dbReference>
<dbReference type="SUPFAM" id="SSF81296">
    <property type="entry name" value="E set domains"/>
    <property type="match status" value="2"/>
</dbReference>
<dbReference type="SUPFAM" id="SSF51011">
    <property type="entry name" value="Glycosyl hydrolase domain"/>
    <property type="match status" value="1"/>
</dbReference>
<protein>
    <recommendedName>
        <fullName evidence="1">1,4-alpha-glucan branching enzyme GlgB</fullName>
        <ecNumber evidence="1">2.4.1.18</ecNumber>
    </recommendedName>
    <alternativeName>
        <fullName evidence="1">1,4-alpha-D-glucan:1,4-alpha-D-glucan 6-glucosyl-transferase</fullName>
    </alternativeName>
    <alternativeName>
        <fullName evidence="1">Alpha-(1-&gt;4)-glucan branching enzyme</fullName>
    </alternativeName>
    <alternativeName>
        <fullName evidence="1">Glycogen branching enzyme</fullName>
        <shortName evidence="1">BE</shortName>
    </alternativeName>
</protein>
<feature type="chain" id="PRO_0000260702" description="1,4-alpha-glucan branching enzyme GlgB">
    <location>
        <begin position="1"/>
        <end position="728"/>
    </location>
</feature>
<feature type="active site" description="Nucleophile" evidence="1">
    <location>
        <position position="405"/>
    </location>
</feature>
<feature type="active site" description="Proton donor" evidence="1">
    <location>
        <position position="458"/>
    </location>
</feature>
<comment type="function">
    <text evidence="1">Catalyzes the formation of the alpha-1,6-glucosidic linkages in glycogen by scission of a 1,4-alpha-linked oligosaccharide from growing alpha-1,4-glucan chains and the subsequent attachment of the oligosaccharide to the alpha-1,6 position.</text>
</comment>
<comment type="catalytic activity">
    <reaction evidence="1">
        <text>Transfers a segment of a (1-&gt;4)-alpha-D-glucan chain to a primary hydroxy group in a similar glucan chain.</text>
        <dbReference type="EC" id="2.4.1.18"/>
    </reaction>
</comment>
<comment type="pathway">
    <text evidence="1">Glycan biosynthesis; glycogen biosynthesis.</text>
</comment>
<comment type="subunit">
    <text evidence="1">Monomer.</text>
</comment>
<comment type="similarity">
    <text evidence="1">Belongs to the glycosyl hydrolase 13 family. GlgB subfamily.</text>
</comment>
<evidence type="ECO:0000255" key="1">
    <source>
        <dbReference type="HAMAP-Rule" id="MF_00685"/>
    </source>
</evidence>
<sequence length="728" mass="84320">MSDRIDRDVINALIAGHFADPFSVLGMHKTTAGLEVRALLPDATDVWVIEPKTGRKLAKLECLDSRGFFSGVIPRRKNFFRYQLAVVWHGQQNLIDDPYRFGPLIQEMDAWLLSEGTHLRPYETLGAHADTMDGVTGTRFSVWAPNARRVSVVGQFNYWDGRRHPMRLRKESGIWELFIPGAHNGQLYKYEMIDANGNLRLKSDPYAFEAQMRPETASLICGLPEKVVQTEERKKANQFDAPISIYEVHLGSWRRHTDNNFWLSYRELADQLVPYAKWMGFTHLELLPINEHPFDGSWGYQPTGLYAPTRRFGTRDDFRYFIDAAHAAGLNVILDWVPGHFPTDDFALAEFDGTNLYEHSDPREGYHQDWNTLIYNYGRREVSNFLVGNALYWIERFGIDALRVDAVASMIYRDYSRKEGEWIPNEFGGRENLEAIEFLRNTNRILGEQVSGAVTMAEESTDFPGVSRPQDMGGLGFWYKWNLGWMHDTLDYMKLDPIYRQYHHDKLTFGMLYNNTENFVLPLSHDEVVHGKKSILDRMPGDAWQKFANLRAYYGWMWAFPGKKLLFMGNEFAQGREWNHDASLDWHLLEGGDNWHHGVQRLVRDLNLTYRHHKAMHELDFDPYGFEWLVVDDKERSVLIFVRRDKEGNEIIVASNFTPVPRHDYRFGINQPGKWREILNTDSMHYHGSNAGNGGTVHSDEIASHGRQHSLSLTLPPLATIWLVREAE</sequence>